<protein>
    <recommendedName>
        <fullName>Lipid phosphate phosphatase gamma</fullName>
        <shortName>AtLPPG</shortName>
        <ecNumber>3.1.3.-</ecNumber>
    </recommendedName>
    <alternativeName>
        <fullName>Phosphatidic acid phosphatase gamma</fullName>
    </alternativeName>
    <alternativeName>
        <fullName>Plastidic phosphatidic acid phosphatase gamma</fullName>
    </alternativeName>
</protein>
<sequence>MDLIPQQLKAVTLTHVRYRPGDQLGHFLAWISLVPVFISLGGFVSHFLFRRELQGIFFGIGLVISQFINEFIKTSVEQARPETCTLLEACDSHGWPSSHSQFMFFFATYFSLMGCKGIGFWFGLRSRWIMNLLHWSLAVVTMYSRVYLGYHTVAQVFAGAALGGIVGASWFWVVNSVLYPFFPVIEESVLGRWLYVKDTSHIPDVLKFEYDNARAARKDMDSAKSD</sequence>
<dbReference type="EC" id="3.1.3.-"/>
<dbReference type="EMBL" id="AL163002">
    <property type="protein sequence ID" value="CAB86075.1"/>
    <property type="status" value="ALT_SEQ"/>
    <property type="molecule type" value="Genomic_DNA"/>
</dbReference>
<dbReference type="EMBL" id="CP002688">
    <property type="protein sequence ID" value="AED90554.1"/>
    <property type="molecule type" value="Genomic_DNA"/>
</dbReference>
<dbReference type="EMBL" id="BT010758">
    <property type="protein sequence ID" value="AAR23728.1"/>
    <property type="molecule type" value="mRNA"/>
</dbReference>
<dbReference type="EMBL" id="BT012429">
    <property type="protein sequence ID" value="AAS92345.1"/>
    <property type="molecule type" value="mRNA"/>
</dbReference>
<dbReference type="EMBL" id="AK228952">
    <property type="protein sequence ID" value="BAF00841.1"/>
    <property type="molecule type" value="mRNA"/>
</dbReference>
<dbReference type="PIR" id="T48329">
    <property type="entry name" value="T48329"/>
</dbReference>
<dbReference type="RefSeq" id="NP_195928.1">
    <property type="nucleotide sequence ID" value="NM_120386.4"/>
</dbReference>
<dbReference type="SMR" id="Q6NLA5"/>
<dbReference type="FunCoup" id="Q6NLA5">
    <property type="interactions" value="3427"/>
</dbReference>
<dbReference type="STRING" id="3702.Q6NLA5"/>
<dbReference type="iPTMnet" id="Q6NLA5"/>
<dbReference type="PaxDb" id="3702-AT5G03080.1"/>
<dbReference type="ProteomicsDB" id="238387"/>
<dbReference type="EnsemblPlants" id="AT5G03080.1">
    <property type="protein sequence ID" value="AT5G03080.1"/>
    <property type="gene ID" value="AT5G03080"/>
</dbReference>
<dbReference type="GeneID" id="831801"/>
<dbReference type="Gramene" id="AT5G03080.1">
    <property type="protein sequence ID" value="AT5G03080.1"/>
    <property type="gene ID" value="AT5G03080"/>
</dbReference>
<dbReference type="KEGG" id="ath:AT5G03080"/>
<dbReference type="Araport" id="AT5G03080"/>
<dbReference type="TAIR" id="AT5G03080">
    <property type="gene designation" value="LPPGAMMA"/>
</dbReference>
<dbReference type="eggNOG" id="KOG3146">
    <property type="taxonomic scope" value="Eukaryota"/>
</dbReference>
<dbReference type="HOGENOM" id="CLU_074922_1_2_1"/>
<dbReference type="InParanoid" id="Q6NLA5"/>
<dbReference type="OMA" id="VYATLIW"/>
<dbReference type="OrthoDB" id="302705at2759"/>
<dbReference type="PhylomeDB" id="Q6NLA5"/>
<dbReference type="BRENDA" id="3.1.3.4">
    <property type="organism ID" value="399"/>
</dbReference>
<dbReference type="PRO" id="PR:Q6NLA5"/>
<dbReference type="Proteomes" id="UP000006548">
    <property type="component" value="Chromosome 5"/>
</dbReference>
<dbReference type="ExpressionAtlas" id="Q6NLA5">
    <property type="expression patterns" value="baseline and differential"/>
</dbReference>
<dbReference type="GO" id="GO:0009507">
    <property type="term" value="C:chloroplast"/>
    <property type="evidence" value="ECO:0000314"/>
    <property type="project" value="TAIR"/>
</dbReference>
<dbReference type="GO" id="GO:0009706">
    <property type="term" value="C:chloroplast inner membrane"/>
    <property type="evidence" value="ECO:0007669"/>
    <property type="project" value="UniProtKB-SubCell"/>
</dbReference>
<dbReference type="GO" id="GO:0008195">
    <property type="term" value="F:phosphatidate phosphatase activity"/>
    <property type="evidence" value="ECO:0000314"/>
    <property type="project" value="TAIR"/>
</dbReference>
<dbReference type="GO" id="GO:0006651">
    <property type="term" value="P:diacylglycerol biosynthetic process"/>
    <property type="evidence" value="ECO:0000314"/>
    <property type="project" value="TAIR"/>
</dbReference>
<dbReference type="GO" id="GO:0048868">
    <property type="term" value="P:pollen tube development"/>
    <property type="evidence" value="ECO:0000315"/>
    <property type="project" value="TAIR"/>
</dbReference>
<dbReference type="CDD" id="cd03382">
    <property type="entry name" value="PAP2_dolichyldiphosphatase"/>
    <property type="match status" value="1"/>
</dbReference>
<dbReference type="FunFam" id="1.20.144.10:FF:000023">
    <property type="entry name" value="Lipid phosphate phosphatase gamma"/>
    <property type="match status" value="1"/>
</dbReference>
<dbReference type="Gene3D" id="1.20.144.10">
    <property type="entry name" value="Phosphatidic acid phosphatase type 2/haloperoxidase"/>
    <property type="match status" value="1"/>
</dbReference>
<dbReference type="InterPro" id="IPR039667">
    <property type="entry name" value="Dolichyldiphosphatase_PAP2"/>
</dbReference>
<dbReference type="InterPro" id="IPR036938">
    <property type="entry name" value="P_Acid_Pase_2/haloperoxi_sf"/>
</dbReference>
<dbReference type="InterPro" id="IPR000326">
    <property type="entry name" value="P_Acid_Pase_2/haloperoxidase"/>
</dbReference>
<dbReference type="PANTHER" id="PTHR11247:SF1">
    <property type="entry name" value="DOLICHYLDIPHOSPHATASE 1"/>
    <property type="match status" value="1"/>
</dbReference>
<dbReference type="PANTHER" id="PTHR11247">
    <property type="entry name" value="PALMITOYL-PROTEIN THIOESTERASE/DOLICHYLDIPHOSPHATASE 1"/>
    <property type="match status" value="1"/>
</dbReference>
<dbReference type="Pfam" id="PF01569">
    <property type="entry name" value="PAP2"/>
    <property type="match status" value="1"/>
</dbReference>
<dbReference type="SMART" id="SM00014">
    <property type="entry name" value="acidPPc"/>
    <property type="match status" value="1"/>
</dbReference>
<dbReference type="SUPFAM" id="SSF48317">
    <property type="entry name" value="Acid phosphatase/Vanadium-dependent haloperoxidase"/>
    <property type="match status" value="1"/>
</dbReference>
<reference key="1">
    <citation type="journal article" date="2000" name="Nature">
        <title>Sequence and analysis of chromosome 5 of the plant Arabidopsis thaliana.</title>
        <authorList>
            <person name="Tabata S."/>
            <person name="Kaneko T."/>
            <person name="Nakamura Y."/>
            <person name="Kotani H."/>
            <person name="Kato T."/>
            <person name="Asamizu E."/>
            <person name="Miyajima N."/>
            <person name="Sasamoto S."/>
            <person name="Kimura T."/>
            <person name="Hosouchi T."/>
            <person name="Kawashima K."/>
            <person name="Kohara M."/>
            <person name="Matsumoto M."/>
            <person name="Matsuno A."/>
            <person name="Muraki A."/>
            <person name="Nakayama S."/>
            <person name="Nakazaki N."/>
            <person name="Naruo K."/>
            <person name="Okumura S."/>
            <person name="Shinpo S."/>
            <person name="Takeuchi C."/>
            <person name="Wada T."/>
            <person name="Watanabe A."/>
            <person name="Yamada M."/>
            <person name="Yasuda M."/>
            <person name="Sato S."/>
            <person name="de la Bastide M."/>
            <person name="Huang E."/>
            <person name="Spiegel L."/>
            <person name="Gnoj L."/>
            <person name="O'Shaughnessy A."/>
            <person name="Preston R."/>
            <person name="Habermann K."/>
            <person name="Murray J."/>
            <person name="Johnson D."/>
            <person name="Rohlfing T."/>
            <person name="Nelson J."/>
            <person name="Stoneking T."/>
            <person name="Pepin K."/>
            <person name="Spieth J."/>
            <person name="Sekhon M."/>
            <person name="Armstrong J."/>
            <person name="Becker M."/>
            <person name="Belter E."/>
            <person name="Cordum H."/>
            <person name="Cordes M."/>
            <person name="Courtney L."/>
            <person name="Courtney W."/>
            <person name="Dante M."/>
            <person name="Du H."/>
            <person name="Edwards J."/>
            <person name="Fryman J."/>
            <person name="Haakensen B."/>
            <person name="Lamar E."/>
            <person name="Latreille P."/>
            <person name="Leonard S."/>
            <person name="Meyer R."/>
            <person name="Mulvaney E."/>
            <person name="Ozersky P."/>
            <person name="Riley A."/>
            <person name="Strowmatt C."/>
            <person name="Wagner-McPherson C."/>
            <person name="Wollam A."/>
            <person name="Yoakum M."/>
            <person name="Bell M."/>
            <person name="Dedhia N."/>
            <person name="Parnell L."/>
            <person name="Shah R."/>
            <person name="Rodriguez M."/>
            <person name="Hoon See L."/>
            <person name="Vil D."/>
            <person name="Baker J."/>
            <person name="Kirchoff K."/>
            <person name="Toth K."/>
            <person name="King L."/>
            <person name="Bahret A."/>
            <person name="Miller B."/>
            <person name="Marra M.A."/>
            <person name="Martienssen R."/>
            <person name="McCombie W.R."/>
            <person name="Wilson R.K."/>
            <person name="Murphy G."/>
            <person name="Bancroft I."/>
            <person name="Volckaert G."/>
            <person name="Wambutt R."/>
            <person name="Duesterhoeft A."/>
            <person name="Stiekema W."/>
            <person name="Pohl T."/>
            <person name="Entian K.-D."/>
            <person name="Terryn N."/>
            <person name="Hartley N."/>
            <person name="Bent E."/>
            <person name="Johnson S."/>
            <person name="Langham S.-A."/>
            <person name="McCullagh B."/>
            <person name="Robben J."/>
            <person name="Grymonprez B."/>
            <person name="Zimmermann W."/>
            <person name="Ramsperger U."/>
            <person name="Wedler H."/>
            <person name="Balke K."/>
            <person name="Wedler E."/>
            <person name="Peters S."/>
            <person name="van Staveren M."/>
            <person name="Dirkse W."/>
            <person name="Mooijman P."/>
            <person name="Klein Lankhorst R."/>
            <person name="Weitzenegger T."/>
            <person name="Bothe G."/>
            <person name="Rose M."/>
            <person name="Hauf J."/>
            <person name="Berneiser S."/>
            <person name="Hempel S."/>
            <person name="Feldpausch M."/>
            <person name="Lamberth S."/>
            <person name="Villarroel R."/>
            <person name="Gielen J."/>
            <person name="Ardiles W."/>
            <person name="Bents O."/>
            <person name="Lemcke K."/>
            <person name="Kolesov G."/>
            <person name="Mayer K.F.X."/>
            <person name="Rudd S."/>
            <person name="Schoof H."/>
            <person name="Schueller C."/>
            <person name="Zaccaria P."/>
            <person name="Mewes H.-W."/>
            <person name="Bevan M."/>
            <person name="Fransz P.F."/>
        </authorList>
    </citation>
    <scope>NUCLEOTIDE SEQUENCE [LARGE SCALE GENOMIC DNA]</scope>
    <source>
        <strain>cv. Columbia</strain>
    </source>
</reference>
<reference key="2">
    <citation type="journal article" date="2017" name="Plant J.">
        <title>Araport11: a complete reannotation of the Arabidopsis thaliana reference genome.</title>
        <authorList>
            <person name="Cheng C.Y."/>
            <person name="Krishnakumar V."/>
            <person name="Chan A.P."/>
            <person name="Thibaud-Nissen F."/>
            <person name="Schobel S."/>
            <person name="Town C.D."/>
        </authorList>
    </citation>
    <scope>GENOME REANNOTATION</scope>
    <source>
        <strain>cv. Columbia</strain>
    </source>
</reference>
<reference key="3">
    <citation type="submission" date="2004-04" db="EMBL/GenBank/DDBJ databases">
        <title>Arabidopsis ORF clones.</title>
        <authorList>
            <person name="Shinn P."/>
            <person name="Chen H."/>
            <person name="Cheuk R.F."/>
            <person name="Kim C.J."/>
            <person name="Ecker J.R."/>
        </authorList>
    </citation>
    <scope>NUCLEOTIDE SEQUENCE [LARGE SCALE MRNA]</scope>
    <source>
        <strain>cv. Columbia</strain>
    </source>
</reference>
<reference key="4">
    <citation type="submission" date="2006-07" db="EMBL/GenBank/DDBJ databases">
        <title>Large-scale analysis of RIKEN Arabidopsis full-length (RAFL) cDNAs.</title>
        <authorList>
            <person name="Totoki Y."/>
            <person name="Seki M."/>
            <person name="Ishida J."/>
            <person name="Nakajima M."/>
            <person name="Enju A."/>
            <person name="Kamiya A."/>
            <person name="Narusaka M."/>
            <person name="Shin-i T."/>
            <person name="Nakagawa M."/>
            <person name="Sakamoto N."/>
            <person name="Oishi K."/>
            <person name="Kohara Y."/>
            <person name="Kobayashi M."/>
            <person name="Toyoda A."/>
            <person name="Sakaki Y."/>
            <person name="Sakurai T."/>
            <person name="Iida K."/>
            <person name="Akiyama K."/>
            <person name="Satou M."/>
            <person name="Toyoda T."/>
            <person name="Konagaya A."/>
            <person name="Carninci P."/>
            <person name="Kawai J."/>
            <person name="Hayashizaki Y."/>
            <person name="Shinozaki K."/>
        </authorList>
    </citation>
    <scope>NUCLEOTIDE SEQUENCE [LARGE SCALE MRNA]</scope>
    <source>
        <strain>cv. Columbia</strain>
    </source>
</reference>
<reference key="5">
    <citation type="journal article" date="2007" name="J. Biol. Chem.">
        <title>Plastidic phosphatidic acid phosphatases identified in a distinct subfamily of lipid phosphate phosphatases with prokaryotic origin.</title>
        <authorList>
            <person name="Nakamura Y."/>
            <person name="Tsuchiya M."/>
            <person name="Ohta H."/>
        </authorList>
    </citation>
    <scope>FUNCTION</scope>
    <scope>ACTIVITY REGULATION</scope>
    <scope>BIOPHYSICOCHEMICAL PROPERTIES</scope>
    <scope>SUBCELLULAR LOCATION</scope>
    <scope>TISSUE SPECIFICITY</scope>
    <scope>DISRUPTION PHENOTYPE</scope>
</reference>
<reference key="6">
    <citation type="journal article" date="2012" name="Mol. Cell. Proteomics">
        <title>Comparative large-scale characterisation of plant vs. mammal proteins reveals similar and idiosyncratic N-alpha acetylation features.</title>
        <authorList>
            <person name="Bienvenut W.V."/>
            <person name="Sumpton D."/>
            <person name="Martinez A."/>
            <person name="Lilla S."/>
            <person name="Espagne C."/>
            <person name="Meinnel T."/>
            <person name="Giglione C."/>
        </authorList>
    </citation>
    <scope>ACETYLATION [LARGE SCALE ANALYSIS] AT MET-1</scope>
    <scope>IDENTIFICATION BY MASS SPECTROMETRY [LARGE SCALE ANALYSIS]</scope>
</reference>
<gene>
    <name type="primary">LPPG</name>
    <name type="ordered locus">At5g03080</name>
    <name type="ORF">F15A17.110</name>
</gene>
<proteinExistence type="evidence at protein level"/>
<evidence type="ECO:0000255" key="1"/>
<evidence type="ECO:0000269" key="2">
    <source>
    </source>
</evidence>
<evidence type="ECO:0000305" key="3"/>
<evidence type="ECO:0000305" key="4">
    <source>
    </source>
</evidence>
<evidence type="ECO:0007744" key="5">
    <source>
    </source>
</evidence>
<comment type="function">
    <text evidence="2">Exhibits phosphatidate phosphatase (PAP) activity in vitro. May play a primary role as PAP in plastids.</text>
</comment>
<comment type="activity regulation">
    <text evidence="2">Inhibited by Mg(2+).</text>
</comment>
<comment type="biophysicochemical properties">
    <phDependence>
        <text evidence="2">Optimum pH is 6.0-8.0.</text>
    </phDependence>
</comment>
<comment type="subcellular location">
    <subcellularLocation>
        <location evidence="4">Plastid</location>
        <location evidence="4">Chloroplast inner membrane</location>
        <topology evidence="4">Multi-pass membrane protein</topology>
    </subcellularLocation>
</comment>
<comment type="tissue specificity">
    <text evidence="2">Expressed in root tips, root branch points, vascular tissue of cotyledons and leaves, pistil, anthers and filaments.</text>
</comment>
<comment type="disruption phenotype">
    <text evidence="2">Lethal effect when homozygous, due to defect in pollen germination and pollen tube growth.</text>
</comment>
<comment type="similarity">
    <text evidence="3">Belongs to the PA-phosphatase related phosphoesterase family.</text>
</comment>
<comment type="sequence caution" evidence="3">
    <conflict type="erroneous gene model prediction">
        <sequence resource="EMBL-CDS" id="CAB86075"/>
    </conflict>
</comment>
<organism>
    <name type="scientific">Arabidopsis thaliana</name>
    <name type="common">Mouse-ear cress</name>
    <dbReference type="NCBI Taxonomy" id="3702"/>
    <lineage>
        <taxon>Eukaryota</taxon>
        <taxon>Viridiplantae</taxon>
        <taxon>Streptophyta</taxon>
        <taxon>Embryophyta</taxon>
        <taxon>Tracheophyta</taxon>
        <taxon>Spermatophyta</taxon>
        <taxon>Magnoliopsida</taxon>
        <taxon>eudicotyledons</taxon>
        <taxon>Gunneridae</taxon>
        <taxon>Pentapetalae</taxon>
        <taxon>rosids</taxon>
        <taxon>malvids</taxon>
        <taxon>Brassicales</taxon>
        <taxon>Brassicaceae</taxon>
        <taxon>Camelineae</taxon>
        <taxon>Arabidopsis</taxon>
    </lineage>
</organism>
<feature type="chain" id="PRO_0000425229" description="Lipid phosphate phosphatase gamma">
    <location>
        <begin position="1"/>
        <end position="226"/>
    </location>
</feature>
<feature type="transmembrane region" description="Helical" evidence="1">
    <location>
        <begin position="24"/>
        <end position="44"/>
    </location>
</feature>
<feature type="transmembrane region" description="Helical" evidence="1">
    <location>
        <begin position="52"/>
        <end position="72"/>
    </location>
</feature>
<feature type="transmembrane region" description="Helical" evidence="1">
    <location>
        <begin position="102"/>
        <end position="122"/>
    </location>
</feature>
<feature type="transmembrane region" description="Helical" evidence="1">
    <location>
        <begin position="128"/>
        <end position="148"/>
    </location>
</feature>
<feature type="transmembrane region" description="Helical" evidence="1">
    <location>
        <begin position="152"/>
        <end position="174"/>
    </location>
</feature>
<feature type="modified residue" description="N-acetylmethionine" evidence="5">
    <location>
        <position position="1"/>
    </location>
</feature>
<name>LPPG_ARATH</name>
<accession>Q6NLA5</accession>
<accession>Q9LYX7</accession>
<keyword id="KW-0007">Acetylation</keyword>
<keyword id="KW-0150">Chloroplast</keyword>
<keyword id="KW-0378">Hydrolase</keyword>
<keyword id="KW-0472">Membrane</keyword>
<keyword id="KW-0934">Plastid</keyword>
<keyword id="KW-1001">Plastid inner membrane</keyword>
<keyword id="KW-1185">Reference proteome</keyword>
<keyword id="KW-0812">Transmembrane</keyword>
<keyword id="KW-1133">Transmembrane helix</keyword>